<gene>
    <name type="primary">SLC16A5</name>
    <name type="synonym">MCT5</name>
    <name type="synonym">MCT6</name>
</gene>
<reference key="1">
    <citation type="journal article" date="1998" name="Biochem. J.">
        <title>Cloning and sequencing of four new mammalian monocarboxylate transporter (MCT) homologues confirms the existence of a transporter family with an ancient past.</title>
        <authorList>
            <person name="Price N.T."/>
            <person name="Jackson V.N."/>
            <person name="Halestrap A.P."/>
        </authorList>
    </citation>
    <scope>NUCLEOTIDE SEQUENCE [MRNA] (ISOFORM 1)</scope>
    <source>
        <tissue>Placenta</tissue>
    </source>
</reference>
<reference key="2">
    <citation type="journal article" date="2004" name="Nat. Genet.">
        <title>Complete sequencing and characterization of 21,243 full-length human cDNAs.</title>
        <authorList>
            <person name="Ota T."/>
            <person name="Suzuki Y."/>
            <person name="Nishikawa T."/>
            <person name="Otsuki T."/>
            <person name="Sugiyama T."/>
            <person name="Irie R."/>
            <person name="Wakamatsu A."/>
            <person name="Hayashi K."/>
            <person name="Sato H."/>
            <person name="Nagai K."/>
            <person name="Kimura K."/>
            <person name="Makita H."/>
            <person name="Sekine M."/>
            <person name="Obayashi M."/>
            <person name="Nishi T."/>
            <person name="Shibahara T."/>
            <person name="Tanaka T."/>
            <person name="Ishii S."/>
            <person name="Yamamoto J."/>
            <person name="Saito K."/>
            <person name="Kawai Y."/>
            <person name="Isono Y."/>
            <person name="Nakamura Y."/>
            <person name="Nagahari K."/>
            <person name="Murakami K."/>
            <person name="Yasuda T."/>
            <person name="Iwayanagi T."/>
            <person name="Wagatsuma M."/>
            <person name="Shiratori A."/>
            <person name="Sudo H."/>
            <person name="Hosoiri T."/>
            <person name="Kaku Y."/>
            <person name="Kodaira H."/>
            <person name="Kondo H."/>
            <person name="Sugawara M."/>
            <person name="Takahashi M."/>
            <person name="Kanda K."/>
            <person name="Yokoi T."/>
            <person name="Furuya T."/>
            <person name="Kikkawa E."/>
            <person name="Omura Y."/>
            <person name="Abe K."/>
            <person name="Kamihara K."/>
            <person name="Katsuta N."/>
            <person name="Sato K."/>
            <person name="Tanikawa M."/>
            <person name="Yamazaki M."/>
            <person name="Ninomiya K."/>
            <person name="Ishibashi T."/>
            <person name="Yamashita H."/>
            <person name="Murakawa K."/>
            <person name="Fujimori K."/>
            <person name="Tanai H."/>
            <person name="Kimata M."/>
            <person name="Watanabe M."/>
            <person name="Hiraoka S."/>
            <person name="Chiba Y."/>
            <person name="Ishida S."/>
            <person name="Ono Y."/>
            <person name="Takiguchi S."/>
            <person name="Watanabe S."/>
            <person name="Yosida M."/>
            <person name="Hotuta T."/>
            <person name="Kusano J."/>
            <person name="Kanehori K."/>
            <person name="Takahashi-Fujii A."/>
            <person name="Hara H."/>
            <person name="Tanase T.-O."/>
            <person name="Nomura Y."/>
            <person name="Togiya S."/>
            <person name="Komai F."/>
            <person name="Hara R."/>
            <person name="Takeuchi K."/>
            <person name="Arita M."/>
            <person name="Imose N."/>
            <person name="Musashino K."/>
            <person name="Yuuki H."/>
            <person name="Oshima A."/>
            <person name="Sasaki N."/>
            <person name="Aotsuka S."/>
            <person name="Yoshikawa Y."/>
            <person name="Matsunawa H."/>
            <person name="Ichihara T."/>
            <person name="Shiohata N."/>
            <person name="Sano S."/>
            <person name="Moriya S."/>
            <person name="Momiyama H."/>
            <person name="Satoh N."/>
            <person name="Takami S."/>
            <person name="Terashima Y."/>
            <person name="Suzuki O."/>
            <person name="Nakagawa S."/>
            <person name="Senoh A."/>
            <person name="Mizoguchi H."/>
            <person name="Goto Y."/>
            <person name="Shimizu F."/>
            <person name="Wakebe H."/>
            <person name="Hishigaki H."/>
            <person name="Watanabe T."/>
            <person name="Sugiyama A."/>
            <person name="Takemoto M."/>
            <person name="Kawakami B."/>
            <person name="Yamazaki M."/>
            <person name="Watanabe K."/>
            <person name="Kumagai A."/>
            <person name="Itakura S."/>
            <person name="Fukuzumi Y."/>
            <person name="Fujimori Y."/>
            <person name="Komiyama M."/>
            <person name="Tashiro H."/>
            <person name="Tanigami A."/>
            <person name="Fujiwara T."/>
            <person name="Ono T."/>
            <person name="Yamada K."/>
            <person name="Fujii Y."/>
            <person name="Ozaki K."/>
            <person name="Hirao M."/>
            <person name="Ohmori Y."/>
            <person name="Kawabata A."/>
            <person name="Hikiji T."/>
            <person name="Kobatake N."/>
            <person name="Inagaki H."/>
            <person name="Ikema Y."/>
            <person name="Okamoto S."/>
            <person name="Okitani R."/>
            <person name="Kawakami T."/>
            <person name="Noguchi S."/>
            <person name="Itoh T."/>
            <person name="Shigeta K."/>
            <person name="Senba T."/>
            <person name="Matsumura K."/>
            <person name="Nakajima Y."/>
            <person name="Mizuno T."/>
            <person name="Morinaga M."/>
            <person name="Sasaki M."/>
            <person name="Togashi T."/>
            <person name="Oyama M."/>
            <person name="Hata H."/>
            <person name="Watanabe M."/>
            <person name="Komatsu T."/>
            <person name="Mizushima-Sugano J."/>
            <person name="Satoh T."/>
            <person name="Shirai Y."/>
            <person name="Takahashi Y."/>
            <person name="Nakagawa K."/>
            <person name="Okumura K."/>
            <person name="Nagase T."/>
            <person name="Nomura N."/>
            <person name="Kikuchi H."/>
            <person name="Masuho Y."/>
            <person name="Yamashita R."/>
            <person name="Nakai K."/>
            <person name="Yada T."/>
            <person name="Nakamura Y."/>
            <person name="Ohara O."/>
            <person name="Isogai T."/>
            <person name="Sugano S."/>
        </authorList>
    </citation>
    <scope>NUCLEOTIDE SEQUENCE [LARGE SCALE MRNA] (ISOFORM 2)</scope>
    <source>
        <tissue>Trachea</tissue>
    </source>
</reference>
<reference key="3">
    <citation type="journal article" date="2006" name="Nature">
        <title>DNA sequence of human chromosome 17 and analysis of rearrangement in the human lineage.</title>
        <authorList>
            <person name="Zody M.C."/>
            <person name="Garber M."/>
            <person name="Adams D.J."/>
            <person name="Sharpe T."/>
            <person name="Harrow J."/>
            <person name="Lupski J.R."/>
            <person name="Nicholson C."/>
            <person name="Searle S.M."/>
            <person name="Wilming L."/>
            <person name="Young S.K."/>
            <person name="Abouelleil A."/>
            <person name="Allen N.R."/>
            <person name="Bi W."/>
            <person name="Bloom T."/>
            <person name="Borowsky M.L."/>
            <person name="Bugalter B.E."/>
            <person name="Butler J."/>
            <person name="Chang J.L."/>
            <person name="Chen C.-K."/>
            <person name="Cook A."/>
            <person name="Corum B."/>
            <person name="Cuomo C.A."/>
            <person name="de Jong P.J."/>
            <person name="DeCaprio D."/>
            <person name="Dewar K."/>
            <person name="FitzGerald M."/>
            <person name="Gilbert J."/>
            <person name="Gibson R."/>
            <person name="Gnerre S."/>
            <person name="Goldstein S."/>
            <person name="Grafham D.V."/>
            <person name="Grocock R."/>
            <person name="Hafez N."/>
            <person name="Hagopian D.S."/>
            <person name="Hart E."/>
            <person name="Norman C.H."/>
            <person name="Humphray S."/>
            <person name="Jaffe D.B."/>
            <person name="Jones M."/>
            <person name="Kamal M."/>
            <person name="Khodiyar V.K."/>
            <person name="LaButti K."/>
            <person name="Laird G."/>
            <person name="Lehoczky J."/>
            <person name="Liu X."/>
            <person name="Lokyitsang T."/>
            <person name="Loveland J."/>
            <person name="Lui A."/>
            <person name="Macdonald P."/>
            <person name="Major J.E."/>
            <person name="Matthews L."/>
            <person name="Mauceli E."/>
            <person name="McCarroll S.A."/>
            <person name="Mihalev A.H."/>
            <person name="Mudge J."/>
            <person name="Nguyen C."/>
            <person name="Nicol R."/>
            <person name="O'Leary S.B."/>
            <person name="Osoegawa K."/>
            <person name="Schwartz D.C."/>
            <person name="Shaw-Smith C."/>
            <person name="Stankiewicz P."/>
            <person name="Steward C."/>
            <person name="Swarbreck D."/>
            <person name="Venkataraman V."/>
            <person name="Whittaker C.A."/>
            <person name="Yang X."/>
            <person name="Zimmer A.R."/>
            <person name="Bradley A."/>
            <person name="Hubbard T."/>
            <person name="Birren B.W."/>
            <person name="Rogers J."/>
            <person name="Lander E.S."/>
            <person name="Nusbaum C."/>
        </authorList>
    </citation>
    <scope>NUCLEOTIDE SEQUENCE [LARGE SCALE GENOMIC DNA]</scope>
</reference>
<reference key="4">
    <citation type="journal article" date="2004" name="Genome Res.">
        <title>The status, quality, and expansion of the NIH full-length cDNA project: the Mammalian Gene Collection (MGC).</title>
        <authorList>
            <consortium name="The MGC Project Team"/>
        </authorList>
    </citation>
    <scope>NUCLEOTIDE SEQUENCE [LARGE SCALE MRNA] (ISOFORM 1)</scope>
    <source>
        <tissue>Blood</tissue>
        <tissue>Pancreas</tissue>
    </source>
</reference>
<dbReference type="EMBL" id="U59299">
    <property type="protein sequence ID" value="AAC52013.1"/>
    <property type="molecule type" value="mRNA"/>
</dbReference>
<dbReference type="EMBL" id="AK304163">
    <property type="protein sequence ID" value="BAG65050.1"/>
    <property type="molecule type" value="mRNA"/>
</dbReference>
<dbReference type="EMBL" id="AC111186">
    <property type="status" value="NOT_ANNOTATED_CDS"/>
    <property type="molecule type" value="Genomic_DNA"/>
</dbReference>
<dbReference type="EMBL" id="BC009684">
    <property type="protein sequence ID" value="AAH09684.1"/>
    <property type="molecule type" value="mRNA"/>
</dbReference>
<dbReference type="EMBL" id="BC033611">
    <property type="protein sequence ID" value="AAH33611.1"/>
    <property type="molecule type" value="mRNA"/>
</dbReference>
<dbReference type="CCDS" id="CCDS11713.1">
    <molecule id="O15375-1"/>
</dbReference>
<dbReference type="RefSeq" id="NP_001258694.1">
    <molecule id="O15375-1"/>
    <property type="nucleotide sequence ID" value="NM_001271765.2"/>
</dbReference>
<dbReference type="RefSeq" id="NP_001356597.1">
    <molecule id="O15375-1"/>
    <property type="nucleotide sequence ID" value="NM_001369668.1"/>
</dbReference>
<dbReference type="RefSeq" id="NP_004686.1">
    <molecule id="O15375-1"/>
    <property type="nucleotide sequence ID" value="NM_004695.4"/>
</dbReference>
<dbReference type="SMR" id="O15375"/>
<dbReference type="BioGRID" id="114569">
    <property type="interactions" value="8"/>
</dbReference>
<dbReference type="FunCoup" id="O15375">
    <property type="interactions" value="114"/>
</dbReference>
<dbReference type="IntAct" id="O15375">
    <property type="interactions" value="2"/>
</dbReference>
<dbReference type="STRING" id="9606.ENSP00000390564"/>
<dbReference type="DrugBank" id="DB00119">
    <property type="generic name" value="Pyruvic acid"/>
</dbReference>
<dbReference type="TCDB" id="2.A.1.13.11">
    <property type="family name" value="the major facilitator superfamily (mfs)"/>
</dbReference>
<dbReference type="iPTMnet" id="O15375"/>
<dbReference type="PhosphoSitePlus" id="O15375"/>
<dbReference type="BioMuta" id="SLC16A5"/>
<dbReference type="jPOST" id="O15375"/>
<dbReference type="MassIVE" id="O15375"/>
<dbReference type="PaxDb" id="9606-ENSP00000390564"/>
<dbReference type="PeptideAtlas" id="O15375"/>
<dbReference type="ProteomicsDB" id="48617">
    <molecule id="O15375-1"/>
</dbReference>
<dbReference type="ProteomicsDB" id="5804"/>
<dbReference type="Antibodypedia" id="46001">
    <property type="antibodies" value="38 antibodies from 14 providers"/>
</dbReference>
<dbReference type="DNASU" id="9121"/>
<dbReference type="Ensembl" id="ENST00000329783.9">
    <molecule id="O15375-1"/>
    <property type="protein sequence ID" value="ENSP00000330141.4"/>
    <property type="gene ID" value="ENSG00000170190.16"/>
</dbReference>
<dbReference type="Ensembl" id="ENST00000450736.6">
    <molecule id="O15375-1"/>
    <property type="protein sequence ID" value="ENSP00000390564.2"/>
    <property type="gene ID" value="ENSG00000170190.16"/>
</dbReference>
<dbReference type="Ensembl" id="ENST00000538213.6">
    <molecule id="O15375-2"/>
    <property type="protein sequence ID" value="ENSP00000440212.2"/>
    <property type="gene ID" value="ENSG00000170190.16"/>
</dbReference>
<dbReference type="Ensembl" id="ENST00000580123.5">
    <molecule id="O15375-1"/>
    <property type="protein sequence ID" value="ENSP00000463434.1"/>
    <property type="gene ID" value="ENSG00000170190.16"/>
</dbReference>
<dbReference type="GeneID" id="9121"/>
<dbReference type="KEGG" id="hsa:9121"/>
<dbReference type="MANE-Select" id="ENST00000329783.9">
    <property type="protein sequence ID" value="ENSP00000330141.4"/>
    <property type="RefSeq nucleotide sequence ID" value="NM_004695.4"/>
    <property type="RefSeq protein sequence ID" value="NP_004686.1"/>
</dbReference>
<dbReference type="UCSC" id="uc002jmr.5">
    <molecule id="O15375-1"/>
    <property type="organism name" value="human"/>
</dbReference>
<dbReference type="AGR" id="HGNC:10926"/>
<dbReference type="CTD" id="9121"/>
<dbReference type="DisGeNET" id="9121"/>
<dbReference type="GeneCards" id="SLC16A5"/>
<dbReference type="HGNC" id="HGNC:10926">
    <property type="gene designation" value="SLC16A5"/>
</dbReference>
<dbReference type="HPA" id="ENSG00000170190">
    <property type="expression patterns" value="Tissue enhanced (kidney)"/>
</dbReference>
<dbReference type="MIM" id="603879">
    <property type="type" value="gene"/>
</dbReference>
<dbReference type="neXtProt" id="NX_O15375"/>
<dbReference type="OpenTargets" id="ENSG00000170190"/>
<dbReference type="PharmGKB" id="PA35817"/>
<dbReference type="VEuPathDB" id="HostDB:ENSG00000170190"/>
<dbReference type="eggNOG" id="KOG2504">
    <property type="taxonomic scope" value="Eukaryota"/>
</dbReference>
<dbReference type="GeneTree" id="ENSGT00940000159666"/>
<dbReference type="InParanoid" id="O15375"/>
<dbReference type="OMA" id="TWGAYQT"/>
<dbReference type="OrthoDB" id="5667at2759"/>
<dbReference type="PAN-GO" id="O15375">
    <property type="GO annotations" value="3 GO annotations based on evolutionary models"/>
</dbReference>
<dbReference type="PhylomeDB" id="O15375"/>
<dbReference type="TreeFam" id="TF313792"/>
<dbReference type="PathwayCommons" id="O15375"/>
<dbReference type="SignaLink" id="O15375"/>
<dbReference type="BioGRID-ORCS" id="9121">
    <property type="hits" value="83 hits in 1158 CRISPR screens"/>
</dbReference>
<dbReference type="ChiTaRS" id="SLC16A5">
    <property type="organism name" value="human"/>
</dbReference>
<dbReference type="GenomeRNAi" id="9121"/>
<dbReference type="Pharos" id="O15375">
    <property type="development level" value="Tdark"/>
</dbReference>
<dbReference type="PRO" id="PR:O15375"/>
<dbReference type="Proteomes" id="UP000005640">
    <property type="component" value="Chromosome 17"/>
</dbReference>
<dbReference type="RNAct" id="O15375">
    <property type="molecule type" value="protein"/>
</dbReference>
<dbReference type="Bgee" id="ENSG00000170190">
    <property type="expression patterns" value="Expressed in metanephros cortex and 145 other cell types or tissues"/>
</dbReference>
<dbReference type="ExpressionAtlas" id="O15375">
    <property type="expression patterns" value="baseline and differential"/>
</dbReference>
<dbReference type="GO" id="GO:0016323">
    <property type="term" value="C:basolateral plasma membrane"/>
    <property type="evidence" value="ECO:0000318"/>
    <property type="project" value="GO_Central"/>
</dbReference>
<dbReference type="GO" id="GO:0016020">
    <property type="term" value="C:membrane"/>
    <property type="evidence" value="ECO:0000304"/>
    <property type="project" value="ProtInc"/>
</dbReference>
<dbReference type="GO" id="GO:0005886">
    <property type="term" value="C:plasma membrane"/>
    <property type="evidence" value="ECO:0000318"/>
    <property type="project" value="GO_Central"/>
</dbReference>
<dbReference type="GO" id="GO:0008028">
    <property type="term" value="F:monocarboxylic acid transmembrane transporter activity"/>
    <property type="evidence" value="ECO:0000318"/>
    <property type="project" value="GO_Central"/>
</dbReference>
<dbReference type="GO" id="GO:0015293">
    <property type="term" value="F:symporter activity"/>
    <property type="evidence" value="ECO:0007669"/>
    <property type="project" value="UniProtKB-KW"/>
</dbReference>
<dbReference type="GO" id="GO:0015718">
    <property type="term" value="P:monocarboxylic acid transport"/>
    <property type="evidence" value="ECO:0000304"/>
    <property type="project" value="ProtInc"/>
</dbReference>
<dbReference type="CDD" id="cd17425">
    <property type="entry name" value="MFS_MCT6"/>
    <property type="match status" value="1"/>
</dbReference>
<dbReference type="FunFam" id="1.20.1250.20:FF:000242">
    <property type="entry name" value="Solute carrier family 16 member 5"/>
    <property type="match status" value="1"/>
</dbReference>
<dbReference type="FunFam" id="1.20.1250.20:FF:000291">
    <property type="entry name" value="Solute carrier family 16 member 5"/>
    <property type="match status" value="1"/>
</dbReference>
<dbReference type="Gene3D" id="1.20.1250.20">
    <property type="entry name" value="MFS general substrate transporter like domains"/>
    <property type="match status" value="2"/>
</dbReference>
<dbReference type="InterPro" id="IPR004743">
    <property type="entry name" value="MCT"/>
</dbReference>
<dbReference type="InterPro" id="IPR011701">
    <property type="entry name" value="MFS"/>
</dbReference>
<dbReference type="InterPro" id="IPR020846">
    <property type="entry name" value="MFS_dom"/>
</dbReference>
<dbReference type="InterPro" id="IPR036259">
    <property type="entry name" value="MFS_trans_sf"/>
</dbReference>
<dbReference type="InterPro" id="IPR050327">
    <property type="entry name" value="Proton-linked_MCT"/>
</dbReference>
<dbReference type="NCBIfam" id="TIGR00892">
    <property type="entry name" value="2A0113"/>
    <property type="match status" value="1"/>
</dbReference>
<dbReference type="PANTHER" id="PTHR11360">
    <property type="entry name" value="MONOCARBOXYLATE TRANSPORTER"/>
    <property type="match status" value="1"/>
</dbReference>
<dbReference type="PANTHER" id="PTHR11360:SF21">
    <property type="entry name" value="MONOCARBOXYLATE TRANSPORTER 6"/>
    <property type="match status" value="1"/>
</dbReference>
<dbReference type="Pfam" id="PF07690">
    <property type="entry name" value="MFS_1"/>
    <property type="match status" value="1"/>
</dbReference>
<dbReference type="SUPFAM" id="SSF103473">
    <property type="entry name" value="MFS general substrate transporter"/>
    <property type="match status" value="1"/>
</dbReference>
<dbReference type="PROSITE" id="PS50850">
    <property type="entry name" value="MFS"/>
    <property type="match status" value="1"/>
</dbReference>
<sequence length="505" mass="54994">MPQALERADGSWAWVVLLATMVTQGLTLGFPTCIGIFFTELQWEFQASNSETSWFPSILTAVLHMAGPLCSILVGRFGCRVTVMLGGVLASLGMVASSFSHNLSQLYFTAGFITGLGMCFSFQSSITVLGFYFVRRRVLANALASMGVSLGITLWPLLSRYLLENLGWRGTFLVFGGIFLHCCICGAIIRPVATSVAPETKECPPPPPETPALGCLAACGRTIQRHLAFDILRHNTGYCVYILGVMWSVLGFPLPQVFLVPYAMWHSVDEQQAALLISIIGFSNIFLRPLAGLMAGRPAFASHRKYLFSLALLLNGLTNLVCAASGDFWVLVGYCLAYSVSMSGIGALIFQVLMDIVPMDQFPRALGLFTVLDGLAFLISPPLAGLLLDATNNFSYVFYMSSFFLISAALFMGGSFYALQKKEQGKQAVAADALERDLFLEAKDGPGKQRSPEIMCQSSRQPRPAGVNKHLWGCPASSRTSHEWLLWPKAVLQAKQTALGWNSPT</sequence>
<protein>
    <recommendedName>
        <fullName>Monocarboxylate transporter 6</fullName>
        <shortName>MCT 6</shortName>
    </recommendedName>
    <alternativeName>
        <fullName>Monocarboxylate transporter 5</fullName>
        <shortName>MCT 5</shortName>
    </alternativeName>
    <alternativeName>
        <fullName>Solute carrier family 16 member 5</fullName>
    </alternativeName>
</protein>
<organism>
    <name type="scientific">Homo sapiens</name>
    <name type="common">Human</name>
    <dbReference type="NCBI Taxonomy" id="9606"/>
    <lineage>
        <taxon>Eukaryota</taxon>
        <taxon>Metazoa</taxon>
        <taxon>Chordata</taxon>
        <taxon>Craniata</taxon>
        <taxon>Vertebrata</taxon>
        <taxon>Euteleostomi</taxon>
        <taxon>Mammalia</taxon>
        <taxon>Eutheria</taxon>
        <taxon>Euarchontoglires</taxon>
        <taxon>Primates</taxon>
        <taxon>Haplorrhini</taxon>
        <taxon>Catarrhini</taxon>
        <taxon>Hominidae</taxon>
        <taxon>Homo</taxon>
    </lineage>
</organism>
<feature type="chain" id="PRO_0000211399" description="Monocarboxylate transporter 6">
    <location>
        <begin position="1"/>
        <end position="505"/>
    </location>
</feature>
<feature type="topological domain" description="Cytoplasmic" evidence="2">
    <location>
        <begin position="1"/>
        <end position="17"/>
    </location>
</feature>
<feature type="transmembrane region" description="Helical" evidence="2">
    <location>
        <begin position="18"/>
        <end position="38"/>
    </location>
</feature>
<feature type="topological domain" description="Extracellular" evidence="2">
    <location>
        <begin position="39"/>
        <end position="53"/>
    </location>
</feature>
<feature type="transmembrane region" description="Helical" evidence="2">
    <location>
        <begin position="54"/>
        <end position="74"/>
    </location>
</feature>
<feature type="topological domain" description="Cytoplasmic" evidence="2">
    <location>
        <begin position="75"/>
        <end position="80"/>
    </location>
</feature>
<feature type="transmembrane region" description="Helical" evidence="2">
    <location>
        <begin position="81"/>
        <end position="101"/>
    </location>
</feature>
<feature type="topological domain" description="Extracellular" evidence="2">
    <location>
        <begin position="102"/>
        <end position="110"/>
    </location>
</feature>
<feature type="transmembrane region" description="Helical" evidence="2">
    <location>
        <begin position="111"/>
        <end position="131"/>
    </location>
</feature>
<feature type="topological domain" description="Cytoplasmic" evidence="2">
    <location>
        <begin position="132"/>
        <end position="137"/>
    </location>
</feature>
<feature type="transmembrane region" description="Helical" evidence="2">
    <location>
        <begin position="138"/>
        <end position="158"/>
    </location>
</feature>
<feature type="topological domain" description="Extracellular" evidence="2">
    <location>
        <begin position="159"/>
        <end position="171"/>
    </location>
</feature>
<feature type="transmembrane region" description="Helical" evidence="2">
    <location>
        <begin position="172"/>
        <end position="192"/>
    </location>
</feature>
<feature type="topological domain" description="Cytoplasmic" evidence="2">
    <location>
        <begin position="193"/>
        <end position="239"/>
    </location>
</feature>
<feature type="transmembrane region" description="Helical" evidence="2">
    <location>
        <begin position="240"/>
        <end position="260"/>
    </location>
</feature>
<feature type="topological domain" description="Extracellular" evidence="2">
    <location>
        <begin position="261"/>
        <end position="274"/>
    </location>
</feature>
<feature type="transmembrane region" description="Helical" evidence="2">
    <location>
        <begin position="275"/>
        <end position="295"/>
    </location>
</feature>
<feature type="topological domain" description="Cytoplasmic" evidence="2">
    <location>
        <begin position="296"/>
        <end position="305"/>
    </location>
</feature>
<feature type="transmembrane region" description="Helical" evidence="2">
    <location>
        <begin position="306"/>
        <end position="326"/>
    </location>
</feature>
<feature type="topological domain" description="Extracellular" evidence="2">
    <location>
        <begin position="327"/>
        <end position="329"/>
    </location>
</feature>
<feature type="transmembrane region" description="Helical" evidence="2">
    <location>
        <begin position="330"/>
        <end position="350"/>
    </location>
</feature>
<feature type="topological domain" description="Cytoplasmic" evidence="2">
    <location>
        <begin position="351"/>
        <end position="367"/>
    </location>
</feature>
<feature type="transmembrane region" description="Helical" evidence="2">
    <location>
        <begin position="368"/>
        <end position="388"/>
    </location>
</feature>
<feature type="topological domain" description="Extracellular" evidence="2">
    <location>
        <begin position="389"/>
        <end position="396"/>
    </location>
</feature>
<feature type="transmembrane region" description="Helical" evidence="2">
    <location>
        <begin position="397"/>
        <end position="417"/>
    </location>
</feature>
<feature type="topological domain" description="Cytoplasmic" evidence="2">
    <location>
        <begin position="418"/>
        <end position="505"/>
    </location>
</feature>
<feature type="region of interest" description="Disordered" evidence="3">
    <location>
        <begin position="443"/>
        <end position="464"/>
    </location>
</feature>
<feature type="splice variant" id="VSP_056660" description="In isoform 2." evidence="4">
    <original>M</original>
    <variation>MPRPTRGPLATSQGWCPSVTPGTWAAATLAVRPWQRRQQRM</variation>
    <location>
        <position position="1"/>
    </location>
</feature>
<feature type="splice variant" id="VSP_056661" description="In isoform 2." evidence="4">
    <original>CQSSRQPRPAGVNKHLWGCPASSRTSHEWLLWPKAVLQAKQTALGWNSPT</original>
    <variation>YVTSV</variation>
    <location>
        <begin position="456"/>
        <end position="505"/>
    </location>
</feature>
<evidence type="ECO:0000250" key="1"/>
<evidence type="ECO:0000255" key="2"/>
<evidence type="ECO:0000256" key="3">
    <source>
        <dbReference type="SAM" id="MobiDB-lite"/>
    </source>
</evidence>
<evidence type="ECO:0000303" key="4">
    <source>
    </source>
</evidence>
<evidence type="ECO:0000305" key="5"/>
<proteinExistence type="evidence at protein level"/>
<comment type="function">
    <text evidence="1">Proton-linked monocarboxylate transporter. Catalyzes the rapid transport across the plasma membrane of many monocarboxylates such as lactate, pyruvate, branched-chain oxo acids derived from leucine, valine and isoleucine, and the ketone bodies acetoacetate, beta-hydroxybutyrate and acetate (By similarity).</text>
</comment>
<comment type="interaction">
    <interactant intactId="EBI-12874738">
        <id>O15375</id>
    </interactant>
    <interactant intactId="EBI-743414">
        <id>O95967</id>
        <label>EFEMP2</label>
    </interactant>
    <organismsDiffer>false</organismsDiffer>
    <experiments>3</experiments>
</comment>
<comment type="interaction">
    <interactant intactId="EBI-12874738">
        <id>O15375</id>
    </interactant>
    <interactant intactId="EBI-739074">
        <id>Q9UJY1</id>
        <label>HSPB8</label>
    </interactant>
    <organismsDiffer>false</organismsDiffer>
    <experiments>3</experiments>
</comment>
<comment type="subcellular location">
    <subcellularLocation>
        <location>Cell membrane</location>
        <topology>Multi-pass membrane protein</topology>
    </subcellularLocation>
</comment>
<comment type="alternative products">
    <event type="alternative splicing"/>
    <isoform>
        <id>O15375-1</id>
        <name>1</name>
        <sequence type="displayed"/>
    </isoform>
    <isoform>
        <id>O15375-2</id>
        <name>2</name>
        <sequence type="described" ref="VSP_056660 VSP_056661"/>
    </isoform>
</comment>
<comment type="tissue specificity">
    <text>Highly expressed in kidney.</text>
</comment>
<comment type="similarity">
    <text evidence="5">Belongs to the major facilitator superfamily. Monocarboxylate porter (TC 2.A.1.13) family.</text>
</comment>
<name>MOT6_HUMAN</name>
<accession>O15375</accession>
<accession>B4E288</accession>
<keyword id="KW-0025">Alternative splicing</keyword>
<keyword id="KW-1003">Cell membrane</keyword>
<keyword id="KW-0472">Membrane</keyword>
<keyword id="KW-1267">Proteomics identification</keyword>
<keyword id="KW-1185">Reference proteome</keyword>
<keyword id="KW-0769">Symport</keyword>
<keyword id="KW-0812">Transmembrane</keyword>
<keyword id="KW-1133">Transmembrane helix</keyword>
<keyword id="KW-0813">Transport</keyword>